<dbReference type="EMBL" id="CR382135">
    <property type="protein sequence ID" value="CAG85924.1"/>
    <property type="molecule type" value="Genomic_DNA"/>
</dbReference>
<dbReference type="RefSeq" id="XP_457878.1">
    <property type="nucleotide sequence ID" value="XM_457878.1"/>
</dbReference>
<dbReference type="SMR" id="Q6BV91"/>
<dbReference type="FunCoup" id="Q6BV91">
    <property type="interactions" value="1034"/>
</dbReference>
<dbReference type="STRING" id="284592.Q6BV91"/>
<dbReference type="GeneID" id="2900690"/>
<dbReference type="KEGG" id="dha:DEHA2C04444g"/>
<dbReference type="VEuPathDB" id="FungiDB:DEHA2C04444g"/>
<dbReference type="eggNOG" id="KOG2441">
    <property type="taxonomic scope" value="Eukaryota"/>
</dbReference>
<dbReference type="HOGENOM" id="CLU_085411_0_0_1"/>
<dbReference type="InParanoid" id="Q6BV91"/>
<dbReference type="OMA" id="HHFPRYT"/>
<dbReference type="OrthoDB" id="666364at2759"/>
<dbReference type="Proteomes" id="UP000000599">
    <property type="component" value="Chromosome C"/>
</dbReference>
<dbReference type="GO" id="GO:0005681">
    <property type="term" value="C:spliceosomal complex"/>
    <property type="evidence" value="ECO:0007669"/>
    <property type="project" value="UniProtKB-KW"/>
</dbReference>
<dbReference type="GO" id="GO:0000398">
    <property type="term" value="P:mRNA splicing, via spliceosome"/>
    <property type="evidence" value="ECO:0007669"/>
    <property type="project" value="InterPro"/>
</dbReference>
<dbReference type="InterPro" id="IPR017862">
    <property type="entry name" value="SKI-int_prot_SKIP"/>
</dbReference>
<dbReference type="InterPro" id="IPR004015">
    <property type="entry name" value="SKI-int_prot_SKIP_SNW-dom"/>
</dbReference>
<dbReference type="PANTHER" id="PTHR12096">
    <property type="entry name" value="NUCLEAR PROTEIN SKIP-RELATED"/>
    <property type="match status" value="1"/>
</dbReference>
<dbReference type="Pfam" id="PF02731">
    <property type="entry name" value="SKIP_SNW"/>
    <property type="match status" value="1"/>
</dbReference>
<evidence type="ECO:0000250" key="1"/>
<evidence type="ECO:0000256" key="2">
    <source>
        <dbReference type="SAM" id="MobiDB-lite"/>
    </source>
</evidence>
<evidence type="ECO:0000305" key="3"/>
<protein>
    <recommendedName>
        <fullName>Pre-mRNA-processing protein 45</fullName>
    </recommendedName>
</protein>
<feature type="chain" id="PRO_0000084819" description="Pre-mRNA-processing protein 45">
    <location>
        <begin position="1"/>
        <end position="341"/>
    </location>
</feature>
<feature type="region of interest" description="Disordered" evidence="2">
    <location>
        <begin position="1"/>
        <end position="31"/>
    </location>
</feature>
<feature type="region of interest" description="Disordered" evidence="2">
    <location>
        <begin position="181"/>
        <end position="226"/>
    </location>
</feature>
<feature type="region of interest" description="Disordered" evidence="2">
    <location>
        <begin position="302"/>
        <end position="341"/>
    </location>
</feature>
<feature type="compositionally biased region" description="Basic residues" evidence="2">
    <location>
        <begin position="192"/>
        <end position="201"/>
    </location>
</feature>
<feature type="compositionally biased region" description="Basic and acidic residues" evidence="2">
    <location>
        <begin position="302"/>
        <end position="318"/>
    </location>
</feature>
<proteinExistence type="inferred from homology"/>
<comment type="function">
    <text evidence="1">Involved in pre-mRNA splicing.</text>
</comment>
<comment type="subunit">
    <text evidence="1">Associated with the spliceosome.</text>
</comment>
<comment type="subcellular location">
    <subcellularLocation>
        <location evidence="1">Nucleus</location>
    </subcellularLocation>
</comment>
<comment type="similarity">
    <text evidence="3">Belongs to the SNW family.</text>
</comment>
<keyword id="KW-0507">mRNA processing</keyword>
<keyword id="KW-0508">mRNA splicing</keyword>
<keyword id="KW-0539">Nucleus</keyword>
<keyword id="KW-1185">Reference proteome</keyword>
<keyword id="KW-0747">Spliceosome</keyword>
<name>PRP45_DEBHA</name>
<reference key="1">
    <citation type="journal article" date="2004" name="Nature">
        <title>Genome evolution in yeasts.</title>
        <authorList>
            <person name="Dujon B."/>
            <person name="Sherman D."/>
            <person name="Fischer G."/>
            <person name="Durrens P."/>
            <person name="Casaregola S."/>
            <person name="Lafontaine I."/>
            <person name="de Montigny J."/>
            <person name="Marck C."/>
            <person name="Neuveglise C."/>
            <person name="Talla E."/>
            <person name="Goffard N."/>
            <person name="Frangeul L."/>
            <person name="Aigle M."/>
            <person name="Anthouard V."/>
            <person name="Babour A."/>
            <person name="Barbe V."/>
            <person name="Barnay S."/>
            <person name="Blanchin S."/>
            <person name="Beckerich J.-M."/>
            <person name="Beyne E."/>
            <person name="Bleykasten C."/>
            <person name="Boisrame A."/>
            <person name="Boyer J."/>
            <person name="Cattolico L."/>
            <person name="Confanioleri F."/>
            <person name="de Daruvar A."/>
            <person name="Despons L."/>
            <person name="Fabre E."/>
            <person name="Fairhead C."/>
            <person name="Ferry-Dumazet H."/>
            <person name="Groppi A."/>
            <person name="Hantraye F."/>
            <person name="Hennequin C."/>
            <person name="Jauniaux N."/>
            <person name="Joyet P."/>
            <person name="Kachouri R."/>
            <person name="Kerrest A."/>
            <person name="Koszul R."/>
            <person name="Lemaire M."/>
            <person name="Lesur I."/>
            <person name="Ma L."/>
            <person name="Muller H."/>
            <person name="Nicaud J.-M."/>
            <person name="Nikolski M."/>
            <person name="Oztas S."/>
            <person name="Ozier-Kalogeropoulos O."/>
            <person name="Pellenz S."/>
            <person name="Potier S."/>
            <person name="Richard G.-F."/>
            <person name="Straub M.-L."/>
            <person name="Suleau A."/>
            <person name="Swennen D."/>
            <person name="Tekaia F."/>
            <person name="Wesolowski-Louvel M."/>
            <person name="Westhof E."/>
            <person name="Wirth B."/>
            <person name="Zeniou-Meyer M."/>
            <person name="Zivanovic Y."/>
            <person name="Bolotin-Fukuhara M."/>
            <person name="Thierry A."/>
            <person name="Bouchier C."/>
            <person name="Caudron B."/>
            <person name="Scarpelli C."/>
            <person name="Gaillardin C."/>
            <person name="Weissenbach J."/>
            <person name="Wincker P."/>
            <person name="Souciet J.-L."/>
        </authorList>
    </citation>
    <scope>NUCLEOTIDE SEQUENCE [LARGE SCALE GENOMIC DNA]</scope>
    <source>
        <strain>ATCC 36239 / CBS 767 / BCRC 21394 / JCM 1990 / NBRC 0083 / IGC 2968</strain>
    </source>
</reference>
<accession>Q6BV91</accession>
<gene>
    <name type="primary">PRP45</name>
    <name type="ordered locus">DEHA2C04444g</name>
</gene>
<organism>
    <name type="scientific">Debaryomyces hansenii (strain ATCC 36239 / CBS 767 / BCRC 21394 / JCM 1990 / NBRC 0083 / IGC 2968)</name>
    <name type="common">Yeast</name>
    <name type="synonym">Torulaspora hansenii</name>
    <dbReference type="NCBI Taxonomy" id="284592"/>
    <lineage>
        <taxon>Eukaryota</taxon>
        <taxon>Fungi</taxon>
        <taxon>Dikarya</taxon>
        <taxon>Ascomycota</taxon>
        <taxon>Saccharomycotina</taxon>
        <taxon>Pichiomycetes</taxon>
        <taxon>Debaryomycetaceae</taxon>
        <taxon>Debaryomyces</taxon>
    </lineage>
</organism>
<sequence>MFSSLLPKPKYSSHEPTSRIKLKKVRAHEKSNQLVKLPENKSDIKVTHNPSNSESTISQLHLNPDGTLNYNLTIASSNSNSRKVQSSYEDTIPLKVKFPNLKHHFPRYTVETCPDDSLKECVEDTKAAINKMINEKMGVDEKTNNKKDDVTYIKYTSNNLVNDPEGSDDERGRERIIQIRNYQEDPMLPPKFKLRKNRHKNPSPPPPLLKSSNNEQTSKLTKEDQAKWQIPSAISNWKNNQGFTISLDKRMVAANGGSELATNDVNLEKFGELSQALENADKQAREEIKIRSEMLKQLAIKEQHEKENKLKELADIARSKKLNNKRPPNGDYDDVKKKTKY</sequence>